<sequence>MNQTNFGFKKIKANEKQSLVNSVFSNVADKYDLMNDLMSFGMHRLWKDEFIRQIPNLNSNILDVASGSGDIALKLAKKAKDRGSNISLTLSDINEEMLRQAKKKSIDLNLFQNLKFTVASAEELPFPDNSFDYYTIAFGIRNVPDINKALKEAYRVLKPMGKFICLEFSKVKESLLQDFYKFYSFNVIPKIGQIITGNKEAYDYLVESIDLFPSQDEFRIMIKEAGFEEINYKNLSGGIVAIHSAYKL</sequence>
<dbReference type="EC" id="2.1.1.163" evidence="1"/>
<dbReference type="EC" id="2.1.1.201" evidence="1"/>
<dbReference type="EMBL" id="CP000087">
    <property type="protein sequence ID" value="ABE04329.1"/>
    <property type="molecule type" value="Genomic_DNA"/>
</dbReference>
<dbReference type="RefSeq" id="WP_011476942.1">
    <property type="nucleotide sequence ID" value="NC_007940.1"/>
</dbReference>
<dbReference type="SMR" id="Q1RJY5"/>
<dbReference type="KEGG" id="rbe:RBE_0248"/>
<dbReference type="eggNOG" id="COG2226">
    <property type="taxonomic scope" value="Bacteria"/>
</dbReference>
<dbReference type="HOGENOM" id="CLU_037990_0_1_5"/>
<dbReference type="OrthoDB" id="9808140at2"/>
<dbReference type="UniPathway" id="UPA00079">
    <property type="reaction ID" value="UER00169"/>
</dbReference>
<dbReference type="UniPathway" id="UPA00232"/>
<dbReference type="Proteomes" id="UP000001951">
    <property type="component" value="Chromosome"/>
</dbReference>
<dbReference type="GO" id="GO:0008425">
    <property type="term" value="F:2-methoxy-6-polyprenyl-1,4-benzoquinol methyltransferase activity"/>
    <property type="evidence" value="ECO:0007669"/>
    <property type="project" value="UniProtKB-UniRule"/>
</dbReference>
<dbReference type="GO" id="GO:0043770">
    <property type="term" value="F:demethylmenaquinone methyltransferase activity"/>
    <property type="evidence" value="ECO:0007669"/>
    <property type="project" value="UniProtKB-UniRule"/>
</dbReference>
<dbReference type="GO" id="GO:0009060">
    <property type="term" value="P:aerobic respiration"/>
    <property type="evidence" value="ECO:0007669"/>
    <property type="project" value="UniProtKB-UniRule"/>
</dbReference>
<dbReference type="GO" id="GO:0009234">
    <property type="term" value="P:menaquinone biosynthetic process"/>
    <property type="evidence" value="ECO:0007669"/>
    <property type="project" value="UniProtKB-UniRule"/>
</dbReference>
<dbReference type="GO" id="GO:0032259">
    <property type="term" value="P:methylation"/>
    <property type="evidence" value="ECO:0007669"/>
    <property type="project" value="UniProtKB-KW"/>
</dbReference>
<dbReference type="CDD" id="cd02440">
    <property type="entry name" value="AdoMet_MTases"/>
    <property type="match status" value="1"/>
</dbReference>
<dbReference type="FunFam" id="3.40.50.150:FF:000250">
    <property type="entry name" value="Ubiquinone/menaquinone biosynthesis C-methyltransferase UbiE"/>
    <property type="match status" value="1"/>
</dbReference>
<dbReference type="Gene3D" id="3.40.50.150">
    <property type="entry name" value="Vaccinia Virus protein VP39"/>
    <property type="match status" value="1"/>
</dbReference>
<dbReference type="HAMAP" id="MF_01813">
    <property type="entry name" value="MenG_UbiE_methyltr"/>
    <property type="match status" value="1"/>
</dbReference>
<dbReference type="InterPro" id="IPR029063">
    <property type="entry name" value="SAM-dependent_MTases_sf"/>
</dbReference>
<dbReference type="InterPro" id="IPR004033">
    <property type="entry name" value="UbiE/COQ5_MeTrFase"/>
</dbReference>
<dbReference type="InterPro" id="IPR023576">
    <property type="entry name" value="UbiE/COQ5_MeTrFase_CS"/>
</dbReference>
<dbReference type="NCBIfam" id="TIGR01934">
    <property type="entry name" value="MenG_MenH_UbiE"/>
    <property type="match status" value="1"/>
</dbReference>
<dbReference type="NCBIfam" id="NF001242">
    <property type="entry name" value="PRK00216.1-3"/>
    <property type="match status" value="1"/>
</dbReference>
<dbReference type="NCBIfam" id="NF001244">
    <property type="entry name" value="PRK00216.1-5"/>
    <property type="match status" value="1"/>
</dbReference>
<dbReference type="PANTHER" id="PTHR43591:SF24">
    <property type="entry name" value="2-METHOXY-6-POLYPRENYL-1,4-BENZOQUINOL METHYLASE, MITOCHONDRIAL"/>
    <property type="match status" value="1"/>
</dbReference>
<dbReference type="PANTHER" id="PTHR43591">
    <property type="entry name" value="METHYLTRANSFERASE"/>
    <property type="match status" value="1"/>
</dbReference>
<dbReference type="Pfam" id="PF01209">
    <property type="entry name" value="Ubie_methyltran"/>
    <property type="match status" value="1"/>
</dbReference>
<dbReference type="SUPFAM" id="SSF53335">
    <property type="entry name" value="S-adenosyl-L-methionine-dependent methyltransferases"/>
    <property type="match status" value="1"/>
</dbReference>
<dbReference type="PROSITE" id="PS51608">
    <property type="entry name" value="SAM_MT_UBIE"/>
    <property type="match status" value="1"/>
</dbReference>
<dbReference type="PROSITE" id="PS01183">
    <property type="entry name" value="UBIE_1"/>
    <property type="match status" value="1"/>
</dbReference>
<dbReference type="PROSITE" id="PS01184">
    <property type="entry name" value="UBIE_2"/>
    <property type="match status" value="1"/>
</dbReference>
<evidence type="ECO:0000255" key="1">
    <source>
        <dbReference type="HAMAP-Rule" id="MF_01813"/>
    </source>
</evidence>
<organism>
    <name type="scientific">Rickettsia bellii (strain RML369-C)</name>
    <dbReference type="NCBI Taxonomy" id="336407"/>
    <lineage>
        <taxon>Bacteria</taxon>
        <taxon>Pseudomonadati</taxon>
        <taxon>Pseudomonadota</taxon>
        <taxon>Alphaproteobacteria</taxon>
        <taxon>Rickettsiales</taxon>
        <taxon>Rickettsiaceae</taxon>
        <taxon>Rickettsieae</taxon>
        <taxon>Rickettsia</taxon>
        <taxon>belli group</taxon>
    </lineage>
</organism>
<reference key="1">
    <citation type="journal article" date="2006" name="PLoS Genet.">
        <title>Genome sequence of Rickettsia bellii illuminates the role of amoebae in gene exchanges between intracellular pathogens.</title>
        <authorList>
            <person name="Ogata H."/>
            <person name="La Scola B."/>
            <person name="Audic S."/>
            <person name="Renesto P."/>
            <person name="Blanc G."/>
            <person name="Robert C."/>
            <person name="Fournier P.-E."/>
            <person name="Claverie J.-M."/>
            <person name="Raoult D."/>
        </authorList>
    </citation>
    <scope>NUCLEOTIDE SEQUENCE [LARGE SCALE GENOMIC DNA]</scope>
    <source>
        <strain>RML369-C</strain>
    </source>
</reference>
<keyword id="KW-0474">Menaquinone biosynthesis</keyword>
<keyword id="KW-0489">Methyltransferase</keyword>
<keyword id="KW-0949">S-adenosyl-L-methionine</keyword>
<keyword id="KW-0808">Transferase</keyword>
<keyword id="KW-0831">Ubiquinone biosynthesis</keyword>
<comment type="function">
    <text evidence="1">Methyltransferase required for the conversion of demethylmenaquinol (DMKH2) to menaquinol (MKH2) and the conversion of 2-polyprenyl-6-methoxy-1,4-benzoquinol (DDMQH2) to 2-polyprenyl-3-methyl-6-methoxy-1,4-benzoquinol (DMQH2).</text>
</comment>
<comment type="catalytic activity">
    <reaction evidence="1">
        <text>a 2-demethylmenaquinol + S-adenosyl-L-methionine = a menaquinol + S-adenosyl-L-homocysteine + H(+)</text>
        <dbReference type="Rhea" id="RHEA:42640"/>
        <dbReference type="Rhea" id="RHEA-COMP:9539"/>
        <dbReference type="Rhea" id="RHEA-COMP:9563"/>
        <dbReference type="ChEBI" id="CHEBI:15378"/>
        <dbReference type="ChEBI" id="CHEBI:18151"/>
        <dbReference type="ChEBI" id="CHEBI:55437"/>
        <dbReference type="ChEBI" id="CHEBI:57856"/>
        <dbReference type="ChEBI" id="CHEBI:59789"/>
        <dbReference type="EC" id="2.1.1.163"/>
    </reaction>
</comment>
<comment type="catalytic activity">
    <reaction evidence="1">
        <text>a 2-methoxy-6-(all-trans-polyprenyl)benzene-1,4-diol + S-adenosyl-L-methionine = a 5-methoxy-2-methyl-3-(all-trans-polyprenyl)benzene-1,4-diol + S-adenosyl-L-homocysteine + H(+)</text>
        <dbReference type="Rhea" id="RHEA:28286"/>
        <dbReference type="Rhea" id="RHEA-COMP:10858"/>
        <dbReference type="Rhea" id="RHEA-COMP:10859"/>
        <dbReference type="ChEBI" id="CHEBI:15378"/>
        <dbReference type="ChEBI" id="CHEBI:57856"/>
        <dbReference type="ChEBI" id="CHEBI:59789"/>
        <dbReference type="ChEBI" id="CHEBI:84166"/>
        <dbReference type="ChEBI" id="CHEBI:84167"/>
        <dbReference type="EC" id="2.1.1.201"/>
    </reaction>
</comment>
<comment type="pathway">
    <text evidence="1">Quinol/quinone metabolism; menaquinone biosynthesis; menaquinol from 1,4-dihydroxy-2-naphthoate: step 2/2.</text>
</comment>
<comment type="pathway">
    <text evidence="1">Cofactor biosynthesis; ubiquinone biosynthesis.</text>
</comment>
<comment type="similarity">
    <text evidence="1">Belongs to the class I-like SAM-binding methyltransferase superfamily. MenG/UbiE family.</text>
</comment>
<name>UBIE_RICBR</name>
<gene>
    <name evidence="1" type="primary">ubiE</name>
    <name type="ordered locus">RBE_0248</name>
</gene>
<feature type="chain" id="PRO_0000272373" description="Ubiquinone/menaquinone biosynthesis C-methyltransferase UbiE">
    <location>
        <begin position="1"/>
        <end position="248"/>
    </location>
</feature>
<feature type="binding site" evidence="1">
    <location>
        <position position="68"/>
    </location>
    <ligand>
        <name>S-adenosyl-L-methionine</name>
        <dbReference type="ChEBI" id="CHEBI:59789"/>
    </ligand>
</feature>
<feature type="binding site" evidence="1">
    <location>
        <position position="92"/>
    </location>
    <ligand>
        <name>S-adenosyl-L-methionine</name>
        <dbReference type="ChEBI" id="CHEBI:59789"/>
    </ligand>
</feature>
<accession>Q1RJY5</accession>
<protein>
    <recommendedName>
        <fullName evidence="1">Ubiquinone/menaquinone biosynthesis C-methyltransferase UbiE</fullName>
        <ecNumber evidence="1">2.1.1.163</ecNumber>
        <ecNumber evidence="1">2.1.1.201</ecNumber>
    </recommendedName>
    <alternativeName>
        <fullName evidence="1">2-methoxy-6-polyprenyl-1,4-benzoquinol methylase</fullName>
    </alternativeName>
    <alternativeName>
        <fullName evidence="1">Demethylmenaquinone methyltransferase</fullName>
    </alternativeName>
</protein>
<proteinExistence type="inferred from homology"/>